<proteinExistence type="inferred from homology"/>
<keyword id="KW-0968">Cytoplasmic vesicle</keyword>
<keyword id="KW-0256">Endoplasmic reticulum</keyword>
<keyword id="KW-0472">Membrane</keyword>
<keyword id="KW-1185">Reference proteome</keyword>
<keyword id="KW-0812">Transmembrane</keyword>
<keyword id="KW-1133">Transmembrane helix</keyword>
<evidence type="ECO:0000255" key="1">
    <source>
        <dbReference type="HAMAP-Rule" id="MF_03058"/>
    </source>
</evidence>
<organism>
    <name type="scientific">Chaetomium globosum (strain ATCC 6205 / CBS 148.51 / DSM 1962 / NBRC 6347 / NRRL 1970)</name>
    <name type="common">Soil fungus</name>
    <dbReference type="NCBI Taxonomy" id="306901"/>
    <lineage>
        <taxon>Eukaryota</taxon>
        <taxon>Fungi</taxon>
        <taxon>Dikarya</taxon>
        <taxon>Ascomycota</taxon>
        <taxon>Pezizomycotina</taxon>
        <taxon>Sordariomycetes</taxon>
        <taxon>Sordariomycetidae</taxon>
        <taxon>Sordariales</taxon>
        <taxon>Chaetomiaceae</taxon>
        <taxon>Chaetomium</taxon>
    </lineage>
</organism>
<name>VMA21_CHAGB</name>
<dbReference type="EMBL" id="CH408029">
    <property type="protein sequence ID" value="EAQ93364.1"/>
    <property type="molecule type" value="Genomic_DNA"/>
</dbReference>
<dbReference type="RefSeq" id="XP_001220820.1">
    <property type="nucleotide sequence ID" value="XM_001220819.1"/>
</dbReference>
<dbReference type="SMR" id="Q2HDV5"/>
<dbReference type="FunCoup" id="Q2HDV5">
    <property type="interactions" value="40"/>
</dbReference>
<dbReference type="STRING" id="306901.Q2HDV5"/>
<dbReference type="GeneID" id="4386423"/>
<dbReference type="VEuPathDB" id="FungiDB:CHGG_01599"/>
<dbReference type="eggNOG" id="ENOG502SBNA">
    <property type="taxonomic scope" value="Eukaryota"/>
</dbReference>
<dbReference type="HOGENOM" id="CLU_154717_1_1_1"/>
<dbReference type="InParanoid" id="Q2HDV5"/>
<dbReference type="OMA" id="AMKEDQT"/>
<dbReference type="OrthoDB" id="160405at2759"/>
<dbReference type="Proteomes" id="UP000001056">
    <property type="component" value="Unassembled WGS sequence"/>
</dbReference>
<dbReference type="GO" id="GO:0005789">
    <property type="term" value="C:endoplasmic reticulum membrane"/>
    <property type="evidence" value="ECO:0007669"/>
    <property type="project" value="UniProtKB-SubCell"/>
</dbReference>
<dbReference type="GO" id="GO:0033116">
    <property type="term" value="C:endoplasmic reticulum-Golgi intermediate compartment membrane"/>
    <property type="evidence" value="ECO:0007669"/>
    <property type="project" value="UniProtKB-SubCell"/>
</dbReference>
<dbReference type="GO" id="GO:0012507">
    <property type="term" value="C:ER to Golgi transport vesicle membrane"/>
    <property type="evidence" value="ECO:0007669"/>
    <property type="project" value="UniProtKB-SubCell"/>
</dbReference>
<dbReference type="GO" id="GO:0070072">
    <property type="term" value="P:vacuolar proton-transporting V-type ATPase complex assembly"/>
    <property type="evidence" value="ECO:0007669"/>
    <property type="project" value="UniProtKB-UniRule"/>
</dbReference>
<dbReference type="HAMAP" id="MF_03058">
    <property type="entry name" value="VMA21"/>
    <property type="match status" value="1"/>
</dbReference>
<dbReference type="InterPro" id="IPR019013">
    <property type="entry name" value="Vma21"/>
</dbReference>
<dbReference type="PANTHER" id="PTHR31792">
    <property type="entry name" value="VACUOLAR ATPASE ASSEMBLY INTEGRAL MEMBRANE PROTEIN VMA21"/>
    <property type="match status" value="1"/>
</dbReference>
<dbReference type="PANTHER" id="PTHR31792:SF3">
    <property type="entry name" value="VACUOLAR ATPASE ASSEMBLY INTEGRAL MEMBRANE PROTEIN VMA21"/>
    <property type="match status" value="1"/>
</dbReference>
<dbReference type="Pfam" id="PF09446">
    <property type="entry name" value="VMA21"/>
    <property type="match status" value="1"/>
</dbReference>
<reference key="1">
    <citation type="journal article" date="2015" name="Genome Announc.">
        <title>Draft genome sequence of the cellulolytic fungus Chaetomium globosum.</title>
        <authorList>
            <person name="Cuomo C.A."/>
            <person name="Untereiner W.A."/>
            <person name="Ma L.-J."/>
            <person name="Grabherr M."/>
            <person name="Birren B.W."/>
        </authorList>
    </citation>
    <scope>NUCLEOTIDE SEQUENCE [LARGE SCALE GENOMIC DNA]</scope>
    <source>
        <strain>ATCC 6205 / CBS 148.51 / DSM 1962 / NBRC 6347 / NRRL 1970</strain>
    </source>
</reference>
<accession>Q2HDV5</accession>
<feature type="chain" id="PRO_0000377584" description="Vacuolar ATPase assembly integral membrane protein VMA21">
    <location>
        <begin position="1"/>
        <end position="114"/>
    </location>
</feature>
<feature type="topological domain" description="Cytoplasmic" evidence="1">
    <location>
        <begin position="1"/>
        <end position="39"/>
    </location>
</feature>
<feature type="transmembrane region" description="Helical" evidence="1">
    <location>
        <begin position="40"/>
        <end position="60"/>
    </location>
</feature>
<feature type="topological domain" description="Lumenal" evidence="1">
    <location>
        <begin position="61"/>
        <end position="73"/>
    </location>
</feature>
<feature type="transmembrane region" description="Helical" evidence="1">
    <location>
        <begin position="74"/>
        <end position="94"/>
    </location>
</feature>
<feature type="topological domain" description="Cytoplasmic" evidence="1">
    <location>
        <begin position="95"/>
        <end position="114"/>
    </location>
</feature>
<feature type="short sequence motif" description="Prevents secretion from ER">
    <location>
        <begin position="111"/>
        <end position="114"/>
    </location>
</feature>
<sequence>MATRRIISQEKTLLEKDDSIGSSPAADEKSNIAPAVPTSVIMKLLAFTLGMIVIPIGSYFATVDSVFNGNSTYAGALAAIMANVVLIGYIFVAMAEDQSDQQEGGGPGDGKKDR</sequence>
<comment type="function">
    <text evidence="1">Required for the assembly of the V0 complex of the vacuolar ATPase (V-ATPase) in the endoplasmic reticulum.</text>
</comment>
<comment type="subcellular location">
    <subcellularLocation>
        <location evidence="1">Endoplasmic reticulum membrane</location>
        <topology evidence="1">Multi-pass membrane protein</topology>
    </subcellularLocation>
    <subcellularLocation>
        <location evidence="1">Endoplasmic reticulum-Golgi intermediate compartment membrane</location>
        <topology evidence="1">Multi-pass membrane protein</topology>
    </subcellularLocation>
    <subcellularLocation>
        <location evidence="1">Cytoplasmic vesicle</location>
        <location evidence="1">COPII-coated vesicle membrane</location>
        <topology evidence="1">Multi-pass membrane protein</topology>
    </subcellularLocation>
</comment>
<comment type="similarity">
    <text evidence="1">Belongs to the VMA21 family.</text>
</comment>
<gene>
    <name evidence="1" type="primary">VMA21</name>
    <name type="ORF">CHGG_01599</name>
</gene>
<protein>
    <recommendedName>
        <fullName evidence="1">Vacuolar ATPase assembly integral membrane protein VMA21</fullName>
    </recommendedName>
</protein>